<comment type="function">
    <text>May function as the terminal enzyme of the myo-inositol oxidation (MIO) pathway. May also play a role in the salvage pathway for synthesis of nucleotide sugars.</text>
</comment>
<comment type="catalytic activity">
    <reaction>
        <text>a monosaccharide 1-phosphate + UTP + H(+) = a UDP-monosaccharide + diphosphate</text>
        <dbReference type="Rhea" id="RHEA:13205"/>
        <dbReference type="ChEBI" id="CHEBI:15378"/>
        <dbReference type="ChEBI" id="CHEBI:33019"/>
        <dbReference type="ChEBI" id="CHEBI:46398"/>
        <dbReference type="ChEBI" id="CHEBI:140358"/>
        <dbReference type="ChEBI" id="CHEBI:140359"/>
        <dbReference type="EC" id="2.7.7.64"/>
    </reaction>
</comment>
<comment type="cofactor">
    <cofactor>
        <name>Mg(2+)</name>
        <dbReference type="ChEBI" id="CHEBI:18420"/>
    </cofactor>
    <cofactor>
        <name>Mn(2+)</name>
        <dbReference type="ChEBI" id="CHEBI:29035"/>
    </cofactor>
</comment>
<comment type="activity regulation">
    <text>Inhibited by a high concentration of pyrophosphate.</text>
</comment>
<comment type="biophysicochemical properties">
    <kinetics>
        <KM evidence="1">0.048 mM for UTP</KM>
        <KM evidence="1">0.34 mM for glucose-1-phosphate</KM>
        <KM evidence="1">0.58 mM for galactose-1-phosphate</KM>
        <KM evidence="1">0.48 mM for glucuronic acid-1-phosphate</KM>
        <KM evidence="1">0.96 mM for arabinose-1-phosphate</KM>
        <KM evidence="1">1.98 mM for xylose-1-phosphate</KM>
        <KM evidence="1">0.34 mM for UPD-glucose</KM>
        <KM evidence="1">0.25 mM for pyrophosphate</KM>
        <Vmax evidence="1">81.0 umol/min/mg enzyme for the forward reaction with UTP as substrate</Vmax>
        <Vmax evidence="1">106.0 umol/min/mg enzyme for the forward reaction with glucose-1-phosphate as substrate</Vmax>
        <Vmax evidence="1">161.0 umol/min/mg enzyme for the forward reaction with galactose-1-phosphate as substrate</Vmax>
        <Vmax evidence="1">66.0 umol/min/mg enzyme for the forward reaction with glucuronic acid-1-phosphate as substrate</Vmax>
        <Vmax evidence="1">71.0 umol/min/mg enzyme for the forward reaction with arabinose-1-phosphate as substrate</Vmax>
        <Vmax evidence="1">49.0 umol/min/mg enzyme for the forward reaction with xylose-1-phosphate as substrate</Vmax>
        <Vmax evidence="1">145.0 umol/min/mg enzyme for the reverse reaction with UDP-glucose as substrate</Vmax>
        <Vmax evidence="1">64.0 umol/min/mg enzyme for the reverse reaction with pyrophosphate as substrate</Vmax>
        <text>High activity with galactose-1-phosphate &gt; glucose-1-phosphate &gt; glucuronic acid-1-phosphate, but low or no activity with N-acetylglucosamine-1-phosphate, fucose-1-phosphate, mannose-1-phosphate or glucose-6-phosphate.</text>
    </kinetics>
    <phDependence>
        <text evidence="1">Optimum pH is 6.5-7.5. Inactive at or below pH 5.0.</text>
    </phDependence>
    <temperatureDependence>
        <text evidence="1">Optimum temperature is 45 degrees Celsius.</text>
    </temperatureDependence>
</comment>
<comment type="PTM">
    <text>The N-terminus is blocked.</text>
</comment>
<comment type="similarity">
    <text evidence="2">Belongs to the USP family.</text>
</comment>
<dbReference type="EC" id="2.7.7.64"/>
<dbReference type="EMBL" id="AB178642">
    <property type="protein sequence ID" value="BAD66876.1"/>
    <property type="molecule type" value="mRNA"/>
</dbReference>
<dbReference type="SMR" id="Q5W915"/>
<dbReference type="KEGG" id="ag:BAD66876"/>
<dbReference type="BioCyc" id="MetaCyc:MONOMER-11146"/>
<dbReference type="BRENDA" id="2.7.7.64">
    <property type="organism ID" value="4872"/>
</dbReference>
<dbReference type="SABIO-RK" id="Q5W915"/>
<dbReference type="GO" id="GO:0003977">
    <property type="term" value="F:UDP-N-acetylglucosamine diphosphorylase activity"/>
    <property type="evidence" value="ECO:0007669"/>
    <property type="project" value="TreeGrafter"/>
</dbReference>
<dbReference type="GO" id="GO:0051748">
    <property type="term" value="F:UTP-monosaccharide-1-phosphate uridylyltransferase activity"/>
    <property type="evidence" value="ECO:0007669"/>
    <property type="project" value="UniProtKB-EC"/>
</dbReference>
<dbReference type="GO" id="GO:0006048">
    <property type="term" value="P:UDP-N-acetylglucosamine biosynthetic process"/>
    <property type="evidence" value="ECO:0007669"/>
    <property type="project" value="TreeGrafter"/>
</dbReference>
<dbReference type="CDD" id="cd06424">
    <property type="entry name" value="UGGPase"/>
    <property type="match status" value="1"/>
</dbReference>
<dbReference type="FunFam" id="2.160.10.30:FF:000001">
    <property type="entry name" value="UDP-sugar pyrophosphorylase"/>
    <property type="match status" value="1"/>
</dbReference>
<dbReference type="FunFam" id="3.90.550.10:FF:000091">
    <property type="entry name" value="UDP-sugar pyrophosphorylase"/>
    <property type="match status" value="1"/>
</dbReference>
<dbReference type="Gene3D" id="2.160.10.30">
    <property type="match status" value="1"/>
</dbReference>
<dbReference type="Gene3D" id="3.90.550.10">
    <property type="entry name" value="Spore Coat Polysaccharide Biosynthesis Protein SpsA, Chain A"/>
    <property type="match status" value="1"/>
</dbReference>
<dbReference type="InterPro" id="IPR029044">
    <property type="entry name" value="Nucleotide-diphossugar_trans"/>
</dbReference>
<dbReference type="InterPro" id="IPR039741">
    <property type="entry name" value="UDP-sugar_pyrophosphorylase"/>
</dbReference>
<dbReference type="InterPro" id="IPR002618">
    <property type="entry name" value="UDPGP_fam"/>
</dbReference>
<dbReference type="PANTHER" id="PTHR11952">
    <property type="entry name" value="UDP- GLUCOSE PYROPHOSPHORYLASE"/>
    <property type="match status" value="1"/>
</dbReference>
<dbReference type="PANTHER" id="PTHR11952:SF9">
    <property type="entry name" value="UDP-SUGAR PYROPHOSPHORYLASE"/>
    <property type="match status" value="1"/>
</dbReference>
<dbReference type="Pfam" id="PF01704">
    <property type="entry name" value="UDPGP"/>
    <property type="match status" value="1"/>
</dbReference>
<dbReference type="SUPFAM" id="SSF53448">
    <property type="entry name" value="Nucleotide-diphospho-sugar transferases"/>
    <property type="match status" value="1"/>
</dbReference>
<feature type="chain" id="PRO_0000289983" description="UDP-sugar pyrophospharylase">
    <location>
        <begin position="1"/>
        <end position="600"/>
    </location>
</feature>
<gene>
    <name type="primary">USP</name>
</gene>
<reference key="1">
    <citation type="journal article" date="2004" name="J. Biol. Chem.">
        <title>UDP-sugar pyrophosphorylase with broad substrate specificity toward various monosaccharide 1-phosphates from pea sprouts.</title>
        <authorList>
            <person name="Kotake T."/>
            <person name="Yamaguchi D."/>
            <person name="Ohzono H."/>
            <person name="Hojo S."/>
            <person name="Kaneko S."/>
            <person name="Ishida H."/>
            <person name="Tsumuraya Y."/>
        </authorList>
    </citation>
    <scope>NUCLEOTIDE SEQUENCE [MRNA]</scope>
    <scope>PROTEIN SEQUENCE OF 325-339</scope>
    <scope>BIOPHYSICOCHEMICAL PROPERTIES</scope>
</reference>
<evidence type="ECO:0000269" key="1">
    <source>
    </source>
</evidence>
<evidence type="ECO:0000305" key="2"/>
<name>USP_PEA</name>
<organism>
    <name type="scientific">Pisum sativum</name>
    <name type="common">Garden pea</name>
    <name type="synonym">Lathyrus oleraceus</name>
    <dbReference type="NCBI Taxonomy" id="3888"/>
    <lineage>
        <taxon>Eukaryota</taxon>
        <taxon>Viridiplantae</taxon>
        <taxon>Streptophyta</taxon>
        <taxon>Embryophyta</taxon>
        <taxon>Tracheophyta</taxon>
        <taxon>Spermatophyta</taxon>
        <taxon>Magnoliopsida</taxon>
        <taxon>eudicotyledons</taxon>
        <taxon>Gunneridae</taxon>
        <taxon>Pentapetalae</taxon>
        <taxon>rosids</taxon>
        <taxon>fabids</taxon>
        <taxon>Fabales</taxon>
        <taxon>Fabaceae</taxon>
        <taxon>Papilionoideae</taxon>
        <taxon>50 kb inversion clade</taxon>
        <taxon>NPAAA clade</taxon>
        <taxon>Hologalegina</taxon>
        <taxon>IRL clade</taxon>
        <taxon>Fabeae</taxon>
        <taxon>Pisum</taxon>
    </lineage>
</organism>
<sequence>MASSLGDNFNLLSPQQRELVKMLLDNGQDHLFRDWPNPGVDDDEKKAFFDQLVLLDSSYPGGLVAYINNAKRLLADSKAGNNPFDGFTPSVPTGETLKFGDENFNKYEEAGVREARRAAFVLVAGGLGERLGYNGIKVALPAETTTGTCFLQHYIESILALQEASSEGEGQTHIPFVIMTSDDTHGRTLDLLESNSYFGMQPTQVTLLKQEKVACLEDNDARLALDPQNRYRVQTKPHGHGDVHSLLHSSGILKVWYNAGLKWVLFFQDTNGLLFKAIPSALGVSSTKQYHVNSLAVPRKAKEAIGGITRLTHSDGRSMVINVEYNQLDPLLRASGYPDGDVNSETGYSPFPGNINQLILELGPYIEELAKTGGAIQEFVNPKYKDASKTSFKSSTRLECMMQDYPKTLPPSSRVGFTVMETWFAYAPVKNNAEDAAKVPKGNPYHSATSGEMAIYRANSLILKKAGFQVADPVLQVINGQEVEVWPRITWKPKWGLTFSLVKSKVSGNCSISQRSTLAIKGRKIFIENLSVDGALIVDAVDDAEVNVSGSVQNNGWALEPVDYKDSSEPEVLRIRGFKFNKVEQVEKKYSEPGKFDFKA</sequence>
<keyword id="KW-0903">Direct protein sequencing</keyword>
<keyword id="KW-0548">Nucleotidyltransferase</keyword>
<keyword id="KW-0808">Transferase</keyword>
<proteinExistence type="evidence at protein level"/>
<accession>Q5W915</accession>
<protein>
    <recommendedName>
        <fullName>UDP-sugar pyrophospharylase</fullName>
        <shortName>PsUSP</shortName>
        <ecNumber>2.7.7.64</ecNumber>
    </recommendedName>
</protein>